<evidence type="ECO:0000250" key="1">
    <source>
        <dbReference type="UniProtKB" id="P70207"/>
    </source>
</evidence>
<evidence type="ECO:0000250" key="2">
    <source>
        <dbReference type="UniProtKB" id="Q9QY40"/>
    </source>
</evidence>
<evidence type="ECO:0000250" key="3">
    <source>
        <dbReference type="UniProtKB" id="Q9ULL4"/>
    </source>
</evidence>
<evidence type="ECO:0000255" key="4"/>
<evidence type="ECO:0000255" key="5">
    <source>
        <dbReference type="PROSITE-ProRule" id="PRU00352"/>
    </source>
</evidence>
<evidence type="ECO:0000256" key="6">
    <source>
        <dbReference type="SAM" id="MobiDB-lite"/>
    </source>
</evidence>
<evidence type="ECO:0000269" key="7">
    <source>
    </source>
</evidence>
<evidence type="ECO:0000303" key="8">
    <source>
    </source>
</evidence>
<evidence type="ECO:0000305" key="9"/>
<comment type="function">
    <text evidence="7">Receptor for SEMA5A that plays a role in axon guidance, invasive growth and cell migration. Stimulates neurite outgrowth and mediates Ca(2+)/Mg(2+)-dependent cell aggregation. In glioma cells, SEMA5A stimulation of PLXNB3 results in the disassembly of F-actin stress fibers, disruption of focal adhesions and cellular collapse as well as inhibition of cell migration and invasion through ARHGDIA-mediated inactivation of RAC1.</text>
</comment>
<comment type="subunit">
    <text evidence="2 3 7">Binds MET and MST1R. Interacts with RIT2/RIN. Interacts (via cytoplasmic domain) with FSCN1 and RAC1. May form homodimers (via Sema domain) (By similarity). Interacts (via cytoplasmic domain) with ARHGDIA.</text>
</comment>
<comment type="subcellular location">
    <subcellularLocation>
        <location evidence="3">Cell membrane</location>
        <topology evidence="3">Single-pass type I membrane protein</topology>
    </subcellularLocation>
    <text evidence="3">Colocalizes with RIT2/RIN at the plasma membrane.</text>
</comment>
<comment type="tissue specificity">
    <text evidence="7">Expressed in glioma cells (at protein level). Expressed in glioma cells and oligodendrocyte precursor cells.</text>
</comment>
<comment type="similarity">
    <text evidence="4">Belongs to the plexin family.</text>
</comment>
<gene>
    <name type="primary">Plxnb3</name>
</gene>
<dbReference type="EMBL" id="AC096338">
    <property type="status" value="NOT_ANNOTATED_CDS"/>
    <property type="molecule type" value="Genomic_DNA"/>
</dbReference>
<dbReference type="RefSeq" id="NP_001129350.1">
    <property type="nucleotide sequence ID" value="NM_001135878.1"/>
</dbReference>
<dbReference type="RefSeq" id="XP_006229649.1">
    <property type="nucleotide sequence ID" value="XM_006229587.5"/>
</dbReference>
<dbReference type="SMR" id="D3ZLH5"/>
<dbReference type="FunCoup" id="D3ZLH5">
    <property type="interactions" value="235"/>
</dbReference>
<dbReference type="STRING" id="10116.ENSRNOP00000072671"/>
<dbReference type="GlyCosmos" id="D3ZLH5">
    <property type="glycosylation" value="9 sites, No reported glycans"/>
</dbReference>
<dbReference type="GlyGen" id="D3ZLH5">
    <property type="glycosylation" value="11 sites"/>
</dbReference>
<dbReference type="PhosphoSitePlus" id="D3ZLH5"/>
<dbReference type="PaxDb" id="10116-ENSRNOP00000053235"/>
<dbReference type="PeptideAtlas" id="D3ZLH5"/>
<dbReference type="Ensembl" id="ENSRNOT00000080088.2">
    <property type="protein sequence ID" value="ENSRNOP00000072671.1"/>
    <property type="gene ID" value="ENSRNOG00000061731.2"/>
</dbReference>
<dbReference type="GeneID" id="363517"/>
<dbReference type="KEGG" id="rno:363517"/>
<dbReference type="AGR" id="RGD:1560615"/>
<dbReference type="CTD" id="5365"/>
<dbReference type="RGD" id="1560615">
    <property type="gene designation" value="Plxnb3"/>
</dbReference>
<dbReference type="eggNOG" id="KOG3610">
    <property type="taxonomic scope" value="Eukaryota"/>
</dbReference>
<dbReference type="GeneTree" id="ENSGT01020000230394"/>
<dbReference type="HOGENOM" id="CLU_001436_1_1_1"/>
<dbReference type="InParanoid" id="D3ZLH5"/>
<dbReference type="OMA" id="YCWLELP"/>
<dbReference type="OrthoDB" id="125363at2759"/>
<dbReference type="PhylomeDB" id="D3ZLH5"/>
<dbReference type="TreeFam" id="TF312962"/>
<dbReference type="Reactome" id="R-RNO-416700">
    <property type="pathway name" value="Other semaphorin interactions"/>
</dbReference>
<dbReference type="PRO" id="PR:D3ZLH5"/>
<dbReference type="Proteomes" id="UP000002494">
    <property type="component" value="Chromosome X"/>
</dbReference>
<dbReference type="Bgee" id="ENSRNOG00000061731">
    <property type="expression patterns" value="Expressed in cerebellum and 6 other cell types or tissues"/>
</dbReference>
<dbReference type="GO" id="GO:0009986">
    <property type="term" value="C:cell surface"/>
    <property type="evidence" value="ECO:0000266"/>
    <property type="project" value="RGD"/>
</dbReference>
<dbReference type="GO" id="GO:0005886">
    <property type="term" value="C:plasma membrane"/>
    <property type="evidence" value="ECO:0000318"/>
    <property type="project" value="GO_Central"/>
</dbReference>
<dbReference type="GO" id="GO:0002116">
    <property type="term" value="C:semaphorin receptor complex"/>
    <property type="evidence" value="ECO:0000318"/>
    <property type="project" value="GO_Central"/>
</dbReference>
<dbReference type="GO" id="GO:0098632">
    <property type="term" value="F:cell-cell adhesion mediator activity"/>
    <property type="evidence" value="ECO:0000266"/>
    <property type="project" value="RGD"/>
</dbReference>
<dbReference type="GO" id="GO:0019904">
    <property type="term" value="F:protein domain specific binding"/>
    <property type="evidence" value="ECO:0000250"/>
    <property type="project" value="UniProtKB"/>
</dbReference>
<dbReference type="GO" id="GO:0051022">
    <property type="term" value="F:Rho GDP-dissociation inhibitor binding"/>
    <property type="evidence" value="ECO:0000266"/>
    <property type="project" value="RGD"/>
</dbReference>
<dbReference type="GO" id="GO:0017154">
    <property type="term" value="F:semaphorin receptor activity"/>
    <property type="evidence" value="ECO:0000250"/>
    <property type="project" value="UniProtKB"/>
</dbReference>
<dbReference type="GO" id="GO:0060326">
    <property type="term" value="P:cell chemotaxis"/>
    <property type="evidence" value="ECO:0000266"/>
    <property type="project" value="RGD"/>
</dbReference>
<dbReference type="GO" id="GO:0007156">
    <property type="term" value="P:homophilic cell adhesion via plasma membrane adhesion molecules"/>
    <property type="evidence" value="ECO:0000266"/>
    <property type="project" value="RGD"/>
</dbReference>
<dbReference type="GO" id="GO:0007162">
    <property type="term" value="P:negative regulation of cell adhesion"/>
    <property type="evidence" value="ECO:0000250"/>
    <property type="project" value="UniProtKB"/>
</dbReference>
<dbReference type="GO" id="GO:0030336">
    <property type="term" value="P:negative regulation of cell migration"/>
    <property type="evidence" value="ECO:0000315"/>
    <property type="project" value="UniProtKB"/>
</dbReference>
<dbReference type="GO" id="GO:0034260">
    <property type="term" value="P:negative regulation of GTPase activity"/>
    <property type="evidence" value="ECO:0000250"/>
    <property type="project" value="UniProtKB"/>
</dbReference>
<dbReference type="GO" id="GO:0010593">
    <property type="term" value="P:negative regulation of lamellipodium assembly"/>
    <property type="evidence" value="ECO:0000315"/>
    <property type="project" value="UniProtKB"/>
</dbReference>
<dbReference type="GO" id="GO:0050918">
    <property type="term" value="P:positive chemotaxis"/>
    <property type="evidence" value="ECO:0000250"/>
    <property type="project" value="UniProtKB"/>
</dbReference>
<dbReference type="GO" id="GO:0050772">
    <property type="term" value="P:positive regulation of axonogenesis"/>
    <property type="evidence" value="ECO:0000318"/>
    <property type="project" value="GO_Central"/>
</dbReference>
<dbReference type="GO" id="GO:0001938">
    <property type="term" value="P:positive regulation of endothelial cell proliferation"/>
    <property type="evidence" value="ECO:0000266"/>
    <property type="project" value="RGD"/>
</dbReference>
<dbReference type="GO" id="GO:0010976">
    <property type="term" value="P:positive regulation of neuron projection development"/>
    <property type="evidence" value="ECO:0000266"/>
    <property type="project" value="RGD"/>
</dbReference>
<dbReference type="GO" id="GO:0008360">
    <property type="term" value="P:regulation of cell shape"/>
    <property type="evidence" value="ECO:0000318"/>
    <property type="project" value="GO_Central"/>
</dbReference>
<dbReference type="GO" id="GO:0071526">
    <property type="term" value="P:semaphorin-plexin signaling pathway"/>
    <property type="evidence" value="ECO:0000315"/>
    <property type="project" value="UniProtKB"/>
</dbReference>
<dbReference type="GO" id="GO:0007416">
    <property type="term" value="P:synapse assembly"/>
    <property type="evidence" value="ECO:0000318"/>
    <property type="project" value="GO_Central"/>
</dbReference>
<dbReference type="CDD" id="cd01180">
    <property type="entry name" value="IPT_plexin_repeat1"/>
    <property type="match status" value="1"/>
</dbReference>
<dbReference type="CDD" id="cd01179">
    <property type="entry name" value="IPT_plexin_repeat2"/>
    <property type="match status" value="1"/>
</dbReference>
<dbReference type="CDD" id="cd12791">
    <property type="entry name" value="RasGAP_plexin_B3"/>
    <property type="match status" value="1"/>
</dbReference>
<dbReference type="CDD" id="cd11277">
    <property type="entry name" value="Sema_plexin_B3"/>
    <property type="match status" value="1"/>
</dbReference>
<dbReference type="FunFam" id="2.60.40.10:FF:000320">
    <property type="entry name" value="Plexin A1"/>
    <property type="match status" value="1"/>
</dbReference>
<dbReference type="FunFam" id="1.10.506.10:FF:000010">
    <property type="entry name" value="Plexin B1"/>
    <property type="match status" value="1"/>
</dbReference>
<dbReference type="FunFam" id="1.10.506.10:FF:000012">
    <property type="entry name" value="Plexin B1"/>
    <property type="match status" value="1"/>
</dbReference>
<dbReference type="FunFam" id="2.60.40.10:FF:000203">
    <property type="entry name" value="Plexin B2"/>
    <property type="match status" value="1"/>
</dbReference>
<dbReference type="FunFam" id="2.60.40.10:FF:000892">
    <property type="entry name" value="Plexin B3"/>
    <property type="match status" value="1"/>
</dbReference>
<dbReference type="FunFam" id="2.60.40.10:FF:000970">
    <property type="entry name" value="Plexin B3"/>
    <property type="match status" value="1"/>
</dbReference>
<dbReference type="FunFam" id="3.10.20.90:FF:000209">
    <property type="entry name" value="Plexin B3"/>
    <property type="match status" value="1"/>
</dbReference>
<dbReference type="FunFam" id="2.130.10.10:FF:000270">
    <property type="entry name" value="plexin-B3 isoform X3"/>
    <property type="match status" value="1"/>
</dbReference>
<dbReference type="Gene3D" id="1.10.506.10">
    <property type="entry name" value="GTPase Activation - p120gap, domain 1"/>
    <property type="match status" value="2"/>
</dbReference>
<dbReference type="Gene3D" id="2.60.40.10">
    <property type="entry name" value="Immunoglobulins"/>
    <property type="match status" value="4"/>
</dbReference>
<dbReference type="Gene3D" id="3.10.20.90">
    <property type="entry name" value="Phosphatidylinositol 3-kinase Catalytic Subunit, Chain A, domain 1"/>
    <property type="match status" value="1"/>
</dbReference>
<dbReference type="Gene3D" id="2.130.10.10">
    <property type="entry name" value="YVTN repeat-like/Quinoprotein amine dehydrogenase"/>
    <property type="match status" value="1"/>
</dbReference>
<dbReference type="InterPro" id="IPR013783">
    <property type="entry name" value="Ig-like_fold"/>
</dbReference>
<dbReference type="InterPro" id="IPR014756">
    <property type="entry name" value="Ig_E-set"/>
</dbReference>
<dbReference type="InterPro" id="IPR002909">
    <property type="entry name" value="IPT_dom"/>
</dbReference>
<dbReference type="InterPro" id="IPR031148">
    <property type="entry name" value="Plexin"/>
</dbReference>
<dbReference type="InterPro" id="IPR013548">
    <property type="entry name" value="Plexin_cytoplasmic_RasGAP_dom"/>
</dbReference>
<dbReference type="InterPro" id="IPR046800">
    <property type="entry name" value="Plexin_RBD"/>
</dbReference>
<dbReference type="InterPro" id="IPR002165">
    <property type="entry name" value="Plexin_repeat"/>
</dbReference>
<dbReference type="InterPro" id="IPR016201">
    <property type="entry name" value="PSI"/>
</dbReference>
<dbReference type="InterPro" id="IPR008936">
    <property type="entry name" value="Rho_GTPase_activation_prot"/>
</dbReference>
<dbReference type="InterPro" id="IPR001627">
    <property type="entry name" value="Semap_dom"/>
</dbReference>
<dbReference type="InterPro" id="IPR036352">
    <property type="entry name" value="Semap_dom_sf"/>
</dbReference>
<dbReference type="InterPro" id="IPR041019">
    <property type="entry name" value="TIG1_plexin"/>
</dbReference>
<dbReference type="InterPro" id="IPR041362">
    <property type="entry name" value="TIG2_plexin"/>
</dbReference>
<dbReference type="InterPro" id="IPR015943">
    <property type="entry name" value="WD40/YVTN_repeat-like_dom_sf"/>
</dbReference>
<dbReference type="PANTHER" id="PTHR22625">
    <property type="entry name" value="PLEXIN"/>
    <property type="match status" value="1"/>
</dbReference>
<dbReference type="PANTHER" id="PTHR22625:SF33">
    <property type="entry name" value="PLEXIN-B3"/>
    <property type="match status" value="1"/>
</dbReference>
<dbReference type="Pfam" id="PF08337">
    <property type="entry name" value="Plexin_cytopl"/>
    <property type="match status" value="1"/>
</dbReference>
<dbReference type="Pfam" id="PF20170">
    <property type="entry name" value="Plexin_RBD"/>
    <property type="match status" value="1"/>
</dbReference>
<dbReference type="Pfam" id="PF01437">
    <property type="entry name" value="PSI"/>
    <property type="match status" value="1"/>
</dbReference>
<dbReference type="Pfam" id="PF24317">
    <property type="entry name" value="PSI_Plexin-B"/>
    <property type="match status" value="1"/>
</dbReference>
<dbReference type="Pfam" id="PF24479">
    <property type="entry name" value="PSI_PlexinA-B"/>
    <property type="match status" value="1"/>
</dbReference>
<dbReference type="Pfam" id="PF01403">
    <property type="entry name" value="Sema"/>
    <property type="match status" value="1"/>
</dbReference>
<dbReference type="Pfam" id="PF01833">
    <property type="entry name" value="TIG"/>
    <property type="match status" value="3"/>
</dbReference>
<dbReference type="Pfam" id="PF18020">
    <property type="entry name" value="TIG_2"/>
    <property type="match status" value="1"/>
</dbReference>
<dbReference type="Pfam" id="PF17960">
    <property type="entry name" value="TIG_plexin"/>
    <property type="match status" value="1"/>
</dbReference>
<dbReference type="SMART" id="SM00429">
    <property type="entry name" value="IPT"/>
    <property type="match status" value="3"/>
</dbReference>
<dbReference type="SMART" id="SM00423">
    <property type="entry name" value="PSI"/>
    <property type="match status" value="3"/>
</dbReference>
<dbReference type="SMART" id="SM00630">
    <property type="entry name" value="Sema"/>
    <property type="match status" value="1"/>
</dbReference>
<dbReference type="SUPFAM" id="SSF81296">
    <property type="entry name" value="E set domains"/>
    <property type="match status" value="3"/>
</dbReference>
<dbReference type="SUPFAM" id="SSF48350">
    <property type="entry name" value="GTPase activation domain, GAP"/>
    <property type="match status" value="1"/>
</dbReference>
<dbReference type="SUPFAM" id="SSF103575">
    <property type="entry name" value="Plexin repeat"/>
    <property type="match status" value="1"/>
</dbReference>
<dbReference type="SUPFAM" id="SSF101912">
    <property type="entry name" value="Sema domain"/>
    <property type="match status" value="1"/>
</dbReference>
<dbReference type="PROSITE" id="PS51004">
    <property type="entry name" value="SEMA"/>
    <property type="match status" value="1"/>
</dbReference>
<feature type="signal peptide" evidence="4">
    <location>
        <begin position="1"/>
        <end position="34"/>
    </location>
</feature>
<feature type="chain" id="PRO_0000420128" description="Plexin-B3" evidence="4">
    <location>
        <begin position="35"/>
        <end position="1902"/>
    </location>
</feature>
<feature type="topological domain" description="Extracellular" evidence="4">
    <location>
        <begin position="35"/>
        <end position="1245"/>
    </location>
</feature>
<feature type="transmembrane region" description="Helical" evidence="4">
    <location>
        <begin position="1246"/>
        <end position="1266"/>
    </location>
</feature>
<feature type="topological domain" description="Cytoplasmic" evidence="4">
    <location>
        <begin position="1267"/>
        <end position="1902"/>
    </location>
</feature>
<feature type="domain" description="Sema" evidence="5 9">
    <location>
        <begin position="35"/>
        <end position="461"/>
    </location>
</feature>
<feature type="domain" description="PSI 1" evidence="4">
    <location>
        <begin position="463"/>
        <end position="515"/>
    </location>
</feature>
<feature type="domain" description="PSI 2" evidence="4">
    <location>
        <begin position="609"/>
        <end position="671"/>
    </location>
</feature>
<feature type="domain" description="PSI 3" evidence="4">
    <location>
        <begin position="776"/>
        <end position="822"/>
    </location>
</feature>
<feature type="domain" description="IPT/TIG 1" evidence="4">
    <location>
        <begin position="824"/>
        <end position="913"/>
    </location>
</feature>
<feature type="domain" description="IPT/TIG 2" evidence="4">
    <location>
        <begin position="915"/>
        <end position="1001"/>
    </location>
</feature>
<feature type="domain" description="IPT/TIG 3" evidence="4">
    <location>
        <begin position="1003"/>
        <end position="1134"/>
    </location>
</feature>
<feature type="region of interest" description="Disordered" evidence="6">
    <location>
        <begin position="353"/>
        <end position="372"/>
    </location>
</feature>
<feature type="glycosylation site" description="N-linked (GlcNAc...) asparagine" evidence="4">
    <location>
        <position position="41"/>
    </location>
</feature>
<feature type="glycosylation site" description="N-linked (GlcNAc...) asparagine" evidence="4">
    <location>
        <position position="221"/>
    </location>
</feature>
<feature type="glycosylation site" description="N-linked (GlcNAc...) asparagine" evidence="4">
    <location>
        <position position="416"/>
    </location>
</feature>
<feature type="glycosylation site" description="N-linked (GlcNAc...) asparagine" evidence="4">
    <location>
        <position position="469"/>
    </location>
</feature>
<feature type="glycosylation site" description="N-linked (GlcNAc...) asparagine" evidence="4">
    <location>
        <position position="791"/>
    </location>
</feature>
<feature type="glycosylation site" description="N-linked (GlcNAc...) asparagine" evidence="4">
    <location>
        <position position="889"/>
    </location>
</feature>
<feature type="glycosylation site" description="N-linked (GlcNAc...) asparagine" evidence="4">
    <location>
        <position position="946"/>
    </location>
</feature>
<feature type="glycosylation site" description="N-linked (GlcNAc...) asparagine" evidence="4">
    <location>
        <position position="1090"/>
    </location>
</feature>
<feature type="glycosylation site" description="N-linked (GlcNAc...) asparagine" evidence="4">
    <location>
        <position position="1207"/>
    </location>
</feature>
<feature type="disulfide bond" evidence="1 5">
    <location>
        <begin position="88"/>
        <end position="97"/>
    </location>
</feature>
<feature type="disulfide bond" evidence="1 5">
    <location>
        <begin position="122"/>
        <end position="130"/>
    </location>
</feature>
<feature type="disulfide bond" evidence="1 5">
    <location>
        <begin position="257"/>
        <end position="360"/>
    </location>
</feature>
<feature type="disulfide bond" evidence="1 5">
    <location>
        <begin position="273"/>
        <end position="305"/>
    </location>
</feature>
<feature type="disulfide bond" evidence="1 5">
    <location>
        <begin position="323"/>
        <end position="347"/>
    </location>
</feature>
<feature type="disulfide bond" evidence="1 5">
    <location>
        <begin position="464"/>
        <end position="481"/>
    </location>
</feature>
<feature type="disulfide bond" evidence="1 5">
    <location>
        <begin position="470"/>
        <end position="514"/>
    </location>
</feature>
<feature type="disulfide bond" evidence="1 5">
    <location>
        <begin position="473"/>
        <end position="490"/>
    </location>
</feature>
<feature type="disulfide bond" evidence="1 5">
    <location>
        <begin position="484"/>
        <end position="496"/>
    </location>
</feature>
<feature type="disulfide bond" evidence="1 5">
    <location>
        <begin position="551"/>
        <end position="569"/>
    </location>
</feature>
<name>PLXB3_RAT</name>
<organism>
    <name type="scientific">Rattus norvegicus</name>
    <name type="common">Rat</name>
    <dbReference type="NCBI Taxonomy" id="10116"/>
    <lineage>
        <taxon>Eukaryota</taxon>
        <taxon>Metazoa</taxon>
        <taxon>Chordata</taxon>
        <taxon>Craniata</taxon>
        <taxon>Vertebrata</taxon>
        <taxon>Euteleostomi</taxon>
        <taxon>Mammalia</taxon>
        <taxon>Eutheria</taxon>
        <taxon>Euarchontoglires</taxon>
        <taxon>Glires</taxon>
        <taxon>Rodentia</taxon>
        <taxon>Myomorpha</taxon>
        <taxon>Muroidea</taxon>
        <taxon>Muridae</taxon>
        <taxon>Murinae</taxon>
        <taxon>Rattus</taxon>
    </lineage>
</organism>
<sequence length="1902" mass="208487">MLTDFLQAPVMAPWSPFSLHLLLLFLLLLPLTRAHRFSVPNASFNHLVLAPDQGKLYVGAVNHLFQLSPELEMESVAITGPVIDSPDCVPFRDLAECPQAQLTDNANQLLLVSSRAQELVACGQVRQGVCEKRRLGDVTQVLYQAEDPGDGQFVAANTLGVTTVGLVVPLPGRDLLLVARGLAGKLSAGVPPLTVRQLAGPQPFSSEGLGRLVVGDFSDYNNSYVGAFSDAHSAYFVFRRRGARAQTEYRSYVARVCLGDVNLYSYVEVPLTCHGQGLIQAAFLAPDTLLGAFSAGTSQAQAALCAFPLADLDGSMEQARRLCYTTGGQGPNGMEEATVEYGVTSRCVTLPPDSPESYPCGDEHTPSPIAGRQPLEAQPLLQLGQPISAVAALQTDGHTIAFLGDTEGQLHKVFLNSSHGQVYHSQQVGPPGSAISPDLLVDNSGDYLYVLTAQQVDRILVAACPQFPNCTTCLQARDPLCGWCILQGRCTRRAECGRAVQPNQWLWSYEDNHCLHIQSLLPAQHPRQEHGQITLSVPGLPNLAMDEYFYCAFGDYNSLAQVEEHHVVCATPPQDRMPPNPPGSDHVTLPLALMFEDVVLAATTFSFYDCSAIQALEVAAPCRTCVSSLWRCHWCPQSSHCVYGERCPEGEKAVYSAQEVDILVRGPEACPQVKGLASPQLVPVGWESHVTLHIENLHYFRGLPALYYCWLELPGKLRKLPAFLEETSRNSGLIHCQAQQFHPSMSQWELPVPIYVTRGEIQRLDNTGDLHVTLYDCAMGHPDCSHCQAANGSLSCLWCGDGQPACRYGPLCPPGAVEQLCPIPSIDVIEPLTGPPEGGLAITILGSNLGQAFNDVRNAVTVAGQPCNPDPSLYRISARIVCVTSPAPNGTSGPVQVAIKSRPPGISAQHFTYQDPVLLSLNPQWGPQAGGTQLTIHGQYLQTGGNVSAFVGDQPCPIQEPVCPEAIICHTMPQMEPGEAVVFVVFGHVERKLLTTPFRYTANPQLVEAEPSVSFRGGGRVIRVRGTGLDVVWQPLLSVWLEDEFQVKALGVQAQDVNPRRSCGAPAADPQACIHLESGLLQCSTLCSVNSSSLLLCHSPAVPDGALPKRVFFALDNMQVDFASASGGQGFLYQPNPRLAPLSHEGITHPYRLKPGHVLDVEGEGLNLGISKEEVQVHIGDGKCLVKTLTLTHLYCEPPQQAPQPTNGSGTLPQFVVQMGNVRLALGPVQYEAEPMISTFPVEAQVGLGMGAAMLIAAVLLLTLMYRHKSKQALRDYQKVLVQLENLETGVGDQCRKEFTDLMTEMTDLTSDLEASGIPFLDYRTYAERAFFPGHVGCPLQPGLEGPGEEGRRVTVCQGLTQLSNLLNSKLFLLTLIHTLEEQPSFSQRDRCHVASLLSLALHSKLEYLTDIMRTLLGDLAAHYVHKNPKLMLRRTETMVEKLLTNWLSICLYAFLKEVAGEPLYMLFRAIKYQVDKGPVDAVTGKAKRTLNDSHLLREDVEFRPLTLMALVGPGAGGAAGNSEVHRVPARVLDTDTITQVKEKVLDQIYKGTPFSQRPSVHSLDLEWRSGLAGHLTLSDEDLTSVTQNHWKRLNTLQHYKVPDGATVVLIPQLHNGGTVSQSLEQTGCHSGENTPMLEDGEEGGVRLWHLVKATEETEGAKVRRSSLRERERERARAKAIPEIYLTRLLSMKGTLQKFVDDTFQAILSMNRPVPIAVKYLFDFLDELAEKHGIEDPETLHIWKTNSLLLRFWVNALKNPQLIFDVRVSDNEDAILAVIAQTFIDSCMVSEHKVGRDSPVNKLLYAREIPRYKQMVEKYYADIRQSSPASYQEMNSALAELSGNYTSAPNCLEALRELYNHIHRYYDQIISALEEDPVAQKMQLACRLQQVAALVEYKVTDL</sequence>
<protein>
    <recommendedName>
        <fullName evidence="8">Plexin-B3</fullName>
    </recommendedName>
    <alternativeName>
        <fullName>Protein Plxnb3</fullName>
    </alternativeName>
</protein>
<keyword id="KW-1003">Cell membrane</keyword>
<keyword id="KW-1015">Disulfide bond</keyword>
<keyword id="KW-0325">Glycoprotein</keyword>
<keyword id="KW-0472">Membrane</keyword>
<keyword id="KW-0524">Neurogenesis</keyword>
<keyword id="KW-0675">Receptor</keyword>
<keyword id="KW-1185">Reference proteome</keyword>
<keyword id="KW-0677">Repeat</keyword>
<keyword id="KW-0732">Signal</keyword>
<keyword id="KW-0812">Transmembrane</keyword>
<keyword id="KW-1133">Transmembrane helix</keyword>
<reference key="1">
    <citation type="journal article" date="2004" name="Nature">
        <title>Genome sequence of the Brown Norway rat yields insights into mammalian evolution.</title>
        <authorList>
            <person name="Gibbs R.A."/>
            <person name="Weinstock G.M."/>
            <person name="Metzker M.L."/>
            <person name="Muzny D.M."/>
            <person name="Sodergren E.J."/>
            <person name="Scherer S."/>
            <person name="Scott G."/>
            <person name="Steffen D."/>
            <person name="Worley K.C."/>
            <person name="Burch P.E."/>
            <person name="Okwuonu G."/>
            <person name="Hines S."/>
            <person name="Lewis L."/>
            <person name="Deramo C."/>
            <person name="Delgado O."/>
            <person name="Dugan-Rocha S."/>
            <person name="Miner G."/>
            <person name="Morgan M."/>
            <person name="Hawes A."/>
            <person name="Gill R."/>
            <person name="Holt R.A."/>
            <person name="Adams M.D."/>
            <person name="Amanatides P.G."/>
            <person name="Baden-Tillson H."/>
            <person name="Barnstead M."/>
            <person name="Chin S."/>
            <person name="Evans C.A."/>
            <person name="Ferriera S."/>
            <person name="Fosler C."/>
            <person name="Glodek A."/>
            <person name="Gu Z."/>
            <person name="Jennings D."/>
            <person name="Kraft C.L."/>
            <person name="Nguyen T."/>
            <person name="Pfannkoch C.M."/>
            <person name="Sitter C."/>
            <person name="Sutton G.G."/>
            <person name="Venter J.C."/>
            <person name="Woodage T."/>
            <person name="Smith D."/>
            <person name="Lee H.-M."/>
            <person name="Gustafson E."/>
            <person name="Cahill P."/>
            <person name="Kana A."/>
            <person name="Doucette-Stamm L."/>
            <person name="Weinstock K."/>
            <person name="Fechtel K."/>
            <person name="Weiss R.B."/>
            <person name="Dunn D.M."/>
            <person name="Green E.D."/>
            <person name="Blakesley R.W."/>
            <person name="Bouffard G.G."/>
            <person name="De Jong P.J."/>
            <person name="Osoegawa K."/>
            <person name="Zhu B."/>
            <person name="Marra M."/>
            <person name="Schein J."/>
            <person name="Bosdet I."/>
            <person name="Fjell C."/>
            <person name="Jones S."/>
            <person name="Krzywinski M."/>
            <person name="Mathewson C."/>
            <person name="Siddiqui A."/>
            <person name="Wye N."/>
            <person name="McPherson J."/>
            <person name="Zhao S."/>
            <person name="Fraser C.M."/>
            <person name="Shetty J."/>
            <person name="Shatsman S."/>
            <person name="Geer K."/>
            <person name="Chen Y."/>
            <person name="Abramzon S."/>
            <person name="Nierman W.C."/>
            <person name="Havlak P.H."/>
            <person name="Chen R."/>
            <person name="Durbin K.J."/>
            <person name="Egan A."/>
            <person name="Ren Y."/>
            <person name="Song X.-Z."/>
            <person name="Li B."/>
            <person name="Liu Y."/>
            <person name="Qin X."/>
            <person name="Cawley S."/>
            <person name="Cooney A.J."/>
            <person name="D'Souza L.M."/>
            <person name="Martin K."/>
            <person name="Wu J.Q."/>
            <person name="Gonzalez-Garay M.L."/>
            <person name="Jackson A.R."/>
            <person name="Kalafus K.J."/>
            <person name="McLeod M.P."/>
            <person name="Milosavljevic A."/>
            <person name="Virk D."/>
            <person name="Volkov A."/>
            <person name="Wheeler D.A."/>
            <person name="Zhang Z."/>
            <person name="Bailey J.A."/>
            <person name="Eichler E.E."/>
            <person name="Tuzun E."/>
            <person name="Birney E."/>
            <person name="Mongin E."/>
            <person name="Ureta-Vidal A."/>
            <person name="Woodwark C."/>
            <person name="Zdobnov E."/>
            <person name="Bork P."/>
            <person name="Suyama M."/>
            <person name="Torrents D."/>
            <person name="Alexandersson M."/>
            <person name="Trask B.J."/>
            <person name="Young J.M."/>
            <person name="Huang H."/>
            <person name="Wang H."/>
            <person name="Xing H."/>
            <person name="Daniels S."/>
            <person name="Gietzen D."/>
            <person name="Schmidt J."/>
            <person name="Stevens K."/>
            <person name="Vitt U."/>
            <person name="Wingrove J."/>
            <person name="Camara F."/>
            <person name="Mar Alba M."/>
            <person name="Abril J.F."/>
            <person name="Guigo R."/>
            <person name="Smit A."/>
            <person name="Dubchak I."/>
            <person name="Rubin E.M."/>
            <person name="Couronne O."/>
            <person name="Poliakov A."/>
            <person name="Huebner N."/>
            <person name="Ganten D."/>
            <person name="Goesele C."/>
            <person name="Hummel O."/>
            <person name="Kreitler T."/>
            <person name="Lee Y.-A."/>
            <person name="Monti J."/>
            <person name="Schulz H."/>
            <person name="Zimdahl H."/>
            <person name="Himmelbauer H."/>
            <person name="Lehrach H."/>
            <person name="Jacob H.J."/>
            <person name="Bromberg S."/>
            <person name="Gullings-Handley J."/>
            <person name="Jensen-Seaman M.I."/>
            <person name="Kwitek A.E."/>
            <person name="Lazar J."/>
            <person name="Pasko D."/>
            <person name="Tonellato P.J."/>
            <person name="Twigger S."/>
            <person name="Ponting C.P."/>
            <person name="Duarte J.M."/>
            <person name="Rice S."/>
            <person name="Goodstadt L."/>
            <person name="Beatson S.A."/>
            <person name="Emes R.D."/>
            <person name="Winter E.E."/>
            <person name="Webber C."/>
            <person name="Brandt P."/>
            <person name="Nyakatura G."/>
            <person name="Adetobi M."/>
            <person name="Chiaromonte F."/>
            <person name="Elnitski L."/>
            <person name="Eswara P."/>
            <person name="Hardison R.C."/>
            <person name="Hou M."/>
            <person name="Kolbe D."/>
            <person name="Makova K."/>
            <person name="Miller W."/>
            <person name="Nekrutenko A."/>
            <person name="Riemer C."/>
            <person name="Schwartz S."/>
            <person name="Taylor J."/>
            <person name="Yang S."/>
            <person name="Zhang Y."/>
            <person name="Lindpaintner K."/>
            <person name="Andrews T.D."/>
            <person name="Caccamo M."/>
            <person name="Clamp M."/>
            <person name="Clarke L."/>
            <person name="Curwen V."/>
            <person name="Durbin R.M."/>
            <person name="Eyras E."/>
            <person name="Searle S.M."/>
            <person name="Cooper G.M."/>
            <person name="Batzoglou S."/>
            <person name="Brudno M."/>
            <person name="Sidow A."/>
            <person name="Stone E.A."/>
            <person name="Payseur B.A."/>
            <person name="Bourque G."/>
            <person name="Lopez-Otin C."/>
            <person name="Puente X.S."/>
            <person name="Chakrabarti K."/>
            <person name="Chatterji S."/>
            <person name="Dewey C."/>
            <person name="Pachter L."/>
            <person name="Bray N."/>
            <person name="Yap V.B."/>
            <person name="Caspi A."/>
            <person name="Tesler G."/>
            <person name="Pevzner P.A."/>
            <person name="Haussler D."/>
            <person name="Roskin K.M."/>
            <person name="Baertsch R."/>
            <person name="Clawson H."/>
            <person name="Furey T.S."/>
            <person name="Hinrichs A.S."/>
            <person name="Karolchik D."/>
            <person name="Kent W.J."/>
            <person name="Rosenbloom K.R."/>
            <person name="Trumbower H."/>
            <person name="Weirauch M."/>
            <person name="Cooper D.N."/>
            <person name="Stenson P.D."/>
            <person name="Ma B."/>
            <person name="Brent M."/>
            <person name="Arumugam M."/>
            <person name="Shteynberg D."/>
            <person name="Copley R.R."/>
            <person name="Taylor M.S."/>
            <person name="Riethman H."/>
            <person name="Mudunuri U."/>
            <person name="Peterson J."/>
            <person name="Guyer M."/>
            <person name="Felsenfeld A."/>
            <person name="Old S."/>
            <person name="Mockrin S."/>
            <person name="Collins F.S."/>
        </authorList>
    </citation>
    <scope>NUCLEOTIDE SEQUENCE [LARGE SCALE GENOMIC DNA]</scope>
    <source>
        <strain>Brown Norway</strain>
    </source>
</reference>
<reference evidence="9" key="2">
    <citation type="journal article" date="2010" name="J. Biol. Chem.">
        <title>Semaphorin 5A and plexin-B3 inhibit human glioma cell motility through RhoGDIalpha-mediated inactivation of Rac1 GTPase.</title>
        <authorList>
            <person name="Li X."/>
            <person name="Lee A.Y."/>
        </authorList>
    </citation>
    <scope>FUNCTION</scope>
    <scope>TISSUE SPECIFICITY</scope>
    <scope>INTERACTION WITH ARHGDIA</scope>
</reference>
<proteinExistence type="evidence at protein level"/>
<accession>D3ZLH5</accession>